<name>PURL_TRIV2</name>
<keyword id="KW-0067">ATP-binding</keyword>
<keyword id="KW-0963">Cytoplasm</keyword>
<keyword id="KW-0436">Ligase</keyword>
<keyword id="KW-0460">Magnesium</keyword>
<keyword id="KW-0479">Metal-binding</keyword>
<keyword id="KW-0547">Nucleotide-binding</keyword>
<keyword id="KW-0658">Purine biosynthesis</keyword>
<organism>
    <name type="scientific">Trichormus variabilis (strain ATCC 29413 / PCC 7937)</name>
    <name type="common">Anabaena variabilis</name>
    <dbReference type="NCBI Taxonomy" id="240292"/>
    <lineage>
        <taxon>Bacteria</taxon>
        <taxon>Bacillati</taxon>
        <taxon>Cyanobacteriota</taxon>
        <taxon>Cyanophyceae</taxon>
        <taxon>Nostocales</taxon>
        <taxon>Nostocaceae</taxon>
        <taxon>Trichormus</taxon>
    </lineage>
</organism>
<gene>
    <name evidence="1" type="primary">purL</name>
    <name type="ordered locus">Ava_3636</name>
</gene>
<comment type="function">
    <text evidence="1">Part of the phosphoribosylformylglycinamidine synthase complex involved in the purines biosynthetic pathway. Catalyzes the ATP-dependent conversion of formylglycinamide ribonucleotide (FGAR) and glutamine to yield formylglycinamidine ribonucleotide (FGAM) and glutamate. The FGAM synthase complex is composed of three subunits. PurQ produces an ammonia molecule by converting glutamine to glutamate. PurL transfers the ammonia molecule to FGAR to form FGAM in an ATP-dependent manner. PurS interacts with PurQ and PurL and is thought to assist in the transfer of the ammonia molecule from PurQ to PurL.</text>
</comment>
<comment type="catalytic activity">
    <reaction evidence="1">
        <text>N(2)-formyl-N(1)-(5-phospho-beta-D-ribosyl)glycinamide + L-glutamine + ATP + H2O = 2-formamido-N(1)-(5-O-phospho-beta-D-ribosyl)acetamidine + L-glutamate + ADP + phosphate + H(+)</text>
        <dbReference type="Rhea" id="RHEA:17129"/>
        <dbReference type="ChEBI" id="CHEBI:15377"/>
        <dbReference type="ChEBI" id="CHEBI:15378"/>
        <dbReference type="ChEBI" id="CHEBI:29985"/>
        <dbReference type="ChEBI" id="CHEBI:30616"/>
        <dbReference type="ChEBI" id="CHEBI:43474"/>
        <dbReference type="ChEBI" id="CHEBI:58359"/>
        <dbReference type="ChEBI" id="CHEBI:147286"/>
        <dbReference type="ChEBI" id="CHEBI:147287"/>
        <dbReference type="ChEBI" id="CHEBI:456216"/>
        <dbReference type="EC" id="6.3.5.3"/>
    </reaction>
</comment>
<comment type="pathway">
    <text evidence="1">Purine metabolism; IMP biosynthesis via de novo pathway; 5-amino-1-(5-phospho-D-ribosyl)imidazole from N(2)-formyl-N(1)-(5-phospho-D-ribosyl)glycinamide: step 1/2.</text>
</comment>
<comment type="subunit">
    <text evidence="1">Monomer. Part of the FGAM synthase complex composed of 1 PurL, 1 PurQ and 2 PurS subunits.</text>
</comment>
<comment type="subcellular location">
    <subcellularLocation>
        <location evidence="1">Cytoplasm</location>
    </subcellularLocation>
</comment>
<comment type="similarity">
    <text evidence="1">Belongs to the FGAMS family.</text>
</comment>
<proteinExistence type="inferred from homology"/>
<dbReference type="EC" id="6.3.5.3" evidence="1"/>
<dbReference type="EMBL" id="CP000117">
    <property type="protein sequence ID" value="ABA23242.1"/>
    <property type="molecule type" value="Genomic_DNA"/>
</dbReference>
<dbReference type="SMR" id="Q3M6Z4"/>
<dbReference type="STRING" id="240292.Ava_3636"/>
<dbReference type="KEGG" id="ava:Ava_3636"/>
<dbReference type="eggNOG" id="COG0046">
    <property type="taxonomic scope" value="Bacteria"/>
</dbReference>
<dbReference type="HOGENOM" id="CLU_003100_0_1_3"/>
<dbReference type="UniPathway" id="UPA00074">
    <property type="reaction ID" value="UER00128"/>
</dbReference>
<dbReference type="Proteomes" id="UP000002533">
    <property type="component" value="Chromosome"/>
</dbReference>
<dbReference type="GO" id="GO:0005737">
    <property type="term" value="C:cytoplasm"/>
    <property type="evidence" value="ECO:0007669"/>
    <property type="project" value="UniProtKB-SubCell"/>
</dbReference>
<dbReference type="GO" id="GO:0005524">
    <property type="term" value="F:ATP binding"/>
    <property type="evidence" value="ECO:0007669"/>
    <property type="project" value="UniProtKB-UniRule"/>
</dbReference>
<dbReference type="GO" id="GO:0000287">
    <property type="term" value="F:magnesium ion binding"/>
    <property type="evidence" value="ECO:0007669"/>
    <property type="project" value="UniProtKB-UniRule"/>
</dbReference>
<dbReference type="GO" id="GO:0004642">
    <property type="term" value="F:phosphoribosylformylglycinamidine synthase activity"/>
    <property type="evidence" value="ECO:0007669"/>
    <property type="project" value="UniProtKB-UniRule"/>
</dbReference>
<dbReference type="GO" id="GO:0006189">
    <property type="term" value="P:'de novo' IMP biosynthetic process"/>
    <property type="evidence" value="ECO:0007669"/>
    <property type="project" value="UniProtKB-UniRule"/>
</dbReference>
<dbReference type="CDD" id="cd02203">
    <property type="entry name" value="PurL_repeat1"/>
    <property type="match status" value="1"/>
</dbReference>
<dbReference type="CDD" id="cd02204">
    <property type="entry name" value="PurL_repeat2"/>
    <property type="match status" value="1"/>
</dbReference>
<dbReference type="FunFam" id="3.30.1330.10:FF:000004">
    <property type="entry name" value="Phosphoribosylformylglycinamidine synthase subunit PurL"/>
    <property type="match status" value="1"/>
</dbReference>
<dbReference type="Gene3D" id="3.90.650.10">
    <property type="entry name" value="PurM-like C-terminal domain"/>
    <property type="match status" value="2"/>
</dbReference>
<dbReference type="Gene3D" id="3.30.1330.10">
    <property type="entry name" value="PurM-like, N-terminal domain"/>
    <property type="match status" value="2"/>
</dbReference>
<dbReference type="HAMAP" id="MF_00420">
    <property type="entry name" value="PurL_2"/>
    <property type="match status" value="1"/>
</dbReference>
<dbReference type="InterPro" id="IPR010074">
    <property type="entry name" value="PRibForGlyAmidine_synth_PurL"/>
</dbReference>
<dbReference type="InterPro" id="IPR041609">
    <property type="entry name" value="PurL_linker"/>
</dbReference>
<dbReference type="InterPro" id="IPR010918">
    <property type="entry name" value="PurM-like_C_dom"/>
</dbReference>
<dbReference type="InterPro" id="IPR036676">
    <property type="entry name" value="PurM-like_C_sf"/>
</dbReference>
<dbReference type="InterPro" id="IPR016188">
    <property type="entry name" value="PurM-like_N"/>
</dbReference>
<dbReference type="InterPro" id="IPR036921">
    <property type="entry name" value="PurM-like_N_sf"/>
</dbReference>
<dbReference type="NCBIfam" id="TIGR01736">
    <property type="entry name" value="FGAM_synth_II"/>
    <property type="match status" value="1"/>
</dbReference>
<dbReference type="NCBIfam" id="NF002290">
    <property type="entry name" value="PRK01213.1"/>
    <property type="match status" value="1"/>
</dbReference>
<dbReference type="PANTHER" id="PTHR43555">
    <property type="entry name" value="PHOSPHORIBOSYLFORMYLGLYCINAMIDINE SYNTHASE SUBUNIT PURL"/>
    <property type="match status" value="1"/>
</dbReference>
<dbReference type="PANTHER" id="PTHR43555:SF1">
    <property type="entry name" value="PHOSPHORIBOSYLFORMYLGLYCINAMIDINE SYNTHASE SUBUNIT PURL"/>
    <property type="match status" value="1"/>
</dbReference>
<dbReference type="Pfam" id="PF00586">
    <property type="entry name" value="AIRS"/>
    <property type="match status" value="2"/>
</dbReference>
<dbReference type="Pfam" id="PF02769">
    <property type="entry name" value="AIRS_C"/>
    <property type="match status" value="2"/>
</dbReference>
<dbReference type="Pfam" id="PF18072">
    <property type="entry name" value="FGAR-AT_linker"/>
    <property type="match status" value="1"/>
</dbReference>
<dbReference type="PIRSF" id="PIRSF001587">
    <property type="entry name" value="FGAM_synthase_II"/>
    <property type="match status" value="1"/>
</dbReference>
<dbReference type="SUPFAM" id="SSF56042">
    <property type="entry name" value="PurM C-terminal domain-like"/>
    <property type="match status" value="2"/>
</dbReference>
<dbReference type="SUPFAM" id="SSF55326">
    <property type="entry name" value="PurM N-terminal domain-like"/>
    <property type="match status" value="2"/>
</dbReference>
<accession>Q3M6Z4</accession>
<feature type="chain" id="PRO_0000236646" description="Phosphoribosylformylglycinamidine synthase subunit PurL">
    <location>
        <begin position="1"/>
        <end position="777"/>
    </location>
</feature>
<feature type="active site" evidence="1">
    <location>
        <position position="50"/>
    </location>
</feature>
<feature type="active site" description="Proton acceptor" evidence="1">
    <location>
        <position position="96"/>
    </location>
</feature>
<feature type="binding site" evidence="1">
    <location>
        <position position="53"/>
    </location>
    <ligand>
        <name>ATP</name>
        <dbReference type="ChEBI" id="CHEBI:30616"/>
    </ligand>
</feature>
<feature type="binding site" evidence="1">
    <location>
        <position position="92"/>
    </location>
    <ligand>
        <name>ATP</name>
        <dbReference type="ChEBI" id="CHEBI:30616"/>
    </ligand>
</feature>
<feature type="binding site" evidence="1">
    <location>
        <position position="94"/>
    </location>
    <ligand>
        <name>Mg(2+)</name>
        <dbReference type="ChEBI" id="CHEBI:18420"/>
        <label>1</label>
    </ligand>
</feature>
<feature type="binding site" evidence="1">
    <location>
        <begin position="95"/>
        <end position="98"/>
    </location>
    <ligand>
        <name>substrate</name>
    </ligand>
</feature>
<feature type="binding site" evidence="1">
    <location>
        <position position="117"/>
    </location>
    <ligand>
        <name>substrate</name>
    </ligand>
</feature>
<feature type="binding site" evidence="1">
    <location>
        <position position="118"/>
    </location>
    <ligand>
        <name>Mg(2+)</name>
        <dbReference type="ChEBI" id="CHEBI:18420"/>
        <label>2</label>
    </ligand>
</feature>
<feature type="binding site" evidence="1">
    <location>
        <position position="241"/>
    </location>
    <ligand>
        <name>substrate</name>
    </ligand>
</feature>
<feature type="binding site" evidence="1">
    <location>
        <position position="269"/>
    </location>
    <ligand>
        <name>Mg(2+)</name>
        <dbReference type="ChEBI" id="CHEBI:18420"/>
        <label>2</label>
    </ligand>
</feature>
<feature type="binding site" evidence="1">
    <location>
        <begin position="313"/>
        <end position="315"/>
    </location>
    <ligand>
        <name>substrate</name>
    </ligand>
</feature>
<feature type="binding site" evidence="1">
    <location>
        <position position="520"/>
    </location>
    <ligand>
        <name>ATP</name>
        <dbReference type="ChEBI" id="CHEBI:30616"/>
    </ligand>
</feature>
<feature type="binding site" evidence="1">
    <location>
        <position position="557"/>
    </location>
    <ligand>
        <name>ATP</name>
        <dbReference type="ChEBI" id="CHEBI:30616"/>
    </ligand>
</feature>
<feature type="binding site" evidence="1">
    <location>
        <position position="558"/>
    </location>
    <ligand>
        <name>Mg(2+)</name>
        <dbReference type="ChEBI" id="CHEBI:18420"/>
        <label>1</label>
    </ligand>
</feature>
<feature type="binding site" evidence="1">
    <location>
        <position position="560"/>
    </location>
    <ligand>
        <name>substrate</name>
    </ligand>
</feature>
<protein>
    <recommendedName>
        <fullName evidence="1">Phosphoribosylformylglycinamidine synthase subunit PurL</fullName>
        <shortName evidence="1">FGAM synthase</shortName>
        <ecNumber evidence="1">6.3.5.3</ecNumber>
    </recommendedName>
    <alternativeName>
        <fullName evidence="1">Formylglycinamide ribonucleotide amidotransferase subunit II</fullName>
        <shortName evidence="1">FGAR amidotransferase II</shortName>
        <shortName evidence="1">FGAR-AT II</shortName>
    </alternativeName>
    <alternativeName>
        <fullName evidence="1">Glutamine amidotransferase PurL</fullName>
    </alternativeName>
    <alternativeName>
        <fullName evidence="1">Phosphoribosylformylglycinamidine synthase subunit II</fullName>
    </alternativeName>
</protein>
<evidence type="ECO:0000255" key="1">
    <source>
        <dbReference type="HAMAP-Rule" id="MF_00420"/>
    </source>
</evidence>
<sequence length="777" mass="83320">MTATSPAPFSPQEIAAEGIKPEEYAEIVRRLGRHPNKAELGMFGVMWSEHCCYKNSRPLLKQFPTTGPRILVGPGENAGVVDLGEGLQLAFKIESHNHPSAVEPFQGAATGVGGILRDIFTMGARPIALLNSLRFGSLEDPKTQRLFSGVVAGISHYGNCVGVPTVGGEVYFDPAYSGNPLVNVMALGLMETPEIVKSGASGIGNPVLYVGSTTGRDGMGGASFASAELSDESIDDRPAVQVGDPFLEKSLIEACLEAFKTGAVVAAQDMGAAGITCSTSEMAAKGGVGIELDLDKIPVRETGMIPYEYLLSESQERMLFVAHKGREQELIDIFHRWGLQAVVAGTVIAEPIVRILFQGAIAAEIPADALAENTPLYERELLAEPPEYARQAWEWSSDSLPTCTTAGIEIQGNLQSWQEILLTLLNTPTIASKNWVYRQYDHQVQNNTVFLPGGADAAVVRLRPLEGQGKITNTLSGVAATVDCNPRYVYLDPYEGAKAVVAEAARNLSCVGAEPLAVTDNLNFGSPEKPIGYWQLSEACRGLAEGCRELATPVTGGNVSLYNETLDPQGNPQPIYPTPVVGMVGLITDLTKICGQGWQTPGDVIYLLGASITTLGASEYLATIHDTVAGRPPRVDFDLERRVQKVCREGIYADWVRSAHDCAEGGLVVALAESCLAGNLGAEIHLDASGSQLQRLDEVLFGEGGARILVSVASTQQENWESYLQEHLGQNWQKLGIVGNTDADLAVLTTDNQSLIRVSIEEMNDRYQNAIARRLAL</sequence>
<reference key="1">
    <citation type="journal article" date="2014" name="Stand. Genomic Sci.">
        <title>Complete genome sequence of Anabaena variabilis ATCC 29413.</title>
        <authorList>
            <person name="Thiel T."/>
            <person name="Pratte B.S."/>
            <person name="Zhong J."/>
            <person name="Goodwin L."/>
            <person name="Copeland A."/>
            <person name="Lucas S."/>
            <person name="Han C."/>
            <person name="Pitluck S."/>
            <person name="Land M.L."/>
            <person name="Kyrpides N.C."/>
            <person name="Woyke T."/>
        </authorList>
    </citation>
    <scope>NUCLEOTIDE SEQUENCE [LARGE SCALE GENOMIC DNA]</scope>
    <source>
        <strain>ATCC 29413 / PCC 7937</strain>
    </source>
</reference>